<accession>C5BR76</accession>
<feature type="chain" id="PRO_1000205903" description="Large ribosomal subunit protein bL19">
    <location>
        <begin position="1"/>
        <end position="118"/>
    </location>
</feature>
<keyword id="KW-1185">Reference proteome</keyword>
<keyword id="KW-0687">Ribonucleoprotein</keyword>
<keyword id="KW-0689">Ribosomal protein</keyword>
<sequence length="118" mass="13451">MSSKNKIIQELENEQLKQELPEFSPGDTVVVQVKVTEGNRERLQAYEGVVIGIRNRGLNSAFTVRKISHGVGVERTFQTHSKQVESITVKRRGDVRQAKLYYLRELTGKAARIKEKLN</sequence>
<organism>
    <name type="scientific">Teredinibacter turnerae (strain ATCC 39867 / T7901)</name>
    <dbReference type="NCBI Taxonomy" id="377629"/>
    <lineage>
        <taxon>Bacteria</taxon>
        <taxon>Pseudomonadati</taxon>
        <taxon>Pseudomonadota</taxon>
        <taxon>Gammaproteobacteria</taxon>
        <taxon>Cellvibrionales</taxon>
        <taxon>Cellvibrionaceae</taxon>
        <taxon>Teredinibacter</taxon>
    </lineage>
</organism>
<comment type="function">
    <text evidence="1">This protein is located at the 30S-50S ribosomal subunit interface and may play a role in the structure and function of the aminoacyl-tRNA binding site.</text>
</comment>
<comment type="similarity">
    <text evidence="1">Belongs to the bacterial ribosomal protein bL19 family.</text>
</comment>
<dbReference type="EMBL" id="CP001614">
    <property type="protein sequence ID" value="ACR14026.1"/>
    <property type="molecule type" value="Genomic_DNA"/>
</dbReference>
<dbReference type="RefSeq" id="WP_015820141.1">
    <property type="nucleotide sequence ID" value="NC_012997.1"/>
</dbReference>
<dbReference type="SMR" id="C5BR76"/>
<dbReference type="STRING" id="377629.TERTU_1162"/>
<dbReference type="GeneID" id="58408918"/>
<dbReference type="GeneID" id="93857504"/>
<dbReference type="KEGG" id="ttu:TERTU_1162"/>
<dbReference type="eggNOG" id="COG0335">
    <property type="taxonomic scope" value="Bacteria"/>
</dbReference>
<dbReference type="HOGENOM" id="CLU_103507_2_2_6"/>
<dbReference type="OrthoDB" id="9803541at2"/>
<dbReference type="Proteomes" id="UP000009080">
    <property type="component" value="Chromosome"/>
</dbReference>
<dbReference type="GO" id="GO:0022625">
    <property type="term" value="C:cytosolic large ribosomal subunit"/>
    <property type="evidence" value="ECO:0007669"/>
    <property type="project" value="TreeGrafter"/>
</dbReference>
<dbReference type="GO" id="GO:0003735">
    <property type="term" value="F:structural constituent of ribosome"/>
    <property type="evidence" value="ECO:0007669"/>
    <property type="project" value="InterPro"/>
</dbReference>
<dbReference type="GO" id="GO:0006412">
    <property type="term" value="P:translation"/>
    <property type="evidence" value="ECO:0007669"/>
    <property type="project" value="UniProtKB-UniRule"/>
</dbReference>
<dbReference type="FunFam" id="2.30.30.790:FF:000001">
    <property type="entry name" value="50S ribosomal protein L19"/>
    <property type="match status" value="1"/>
</dbReference>
<dbReference type="Gene3D" id="2.30.30.790">
    <property type="match status" value="1"/>
</dbReference>
<dbReference type="HAMAP" id="MF_00402">
    <property type="entry name" value="Ribosomal_bL19"/>
    <property type="match status" value="1"/>
</dbReference>
<dbReference type="InterPro" id="IPR001857">
    <property type="entry name" value="Ribosomal_bL19"/>
</dbReference>
<dbReference type="InterPro" id="IPR018257">
    <property type="entry name" value="Ribosomal_bL19_CS"/>
</dbReference>
<dbReference type="InterPro" id="IPR038657">
    <property type="entry name" value="Ribosomal_bL19_sf"/>
</dbReference>
<dbReference type="InterPro" id="IPR008991">
    <property type="entry name" value="Translation_prot_SH3-like_sf"/>
</dbReference>
<dbReference type="NCBIfam" id="TIGR01024">
    <property type="entry name" value="rplS_bact"/>
    <property type="match status" value="1"/>
</dbReference>
<dbReference type="PANTHER" id="PTHR15680:SF9">
    <property type="entry name" value="LARGE RIBOSOMAL SUBUNIT PROTEIN BL19M"/>
    <property type="match status" value="1"/>
</dbReference>
<dbReference type="PANTHER" id="PTHR15680">
    <property type="entry name" value="RIBOSOMAL PROTEIN L19"/>
    <property type="match status" value="1"/>
</dbReference>
<dbReference type="Pfam" id="PF01245">
    <property type="entry name" value="Ribosomal_L19"/>
    <property type="match status" value="1"/>
</dbReference>
<dbReference type="PIRSF" id="PIRSF002191">
    <property type="entry name" value="Ribosomal_L19"/>
    <property type="match status" value="1"/>
</dbReference>
<dbReference type="PRINTS" id="PR00061">
    <property type="entry name" value="RIBOSOMALL19"/>
</dbReference>
<dbReference type="SUPFAM" id="SSF50104">
    <property type="entry name" value="Translation proteins SH3-like domain"/>
    <property type="match status" value="1"/>
</dbReference>
<dbReference type="PROSITE" id="PS01015">
    <property type="entry name" value="RIBOSOMAL_L19"/>
    <property type="match status" value="1"/>
</dbReference>
<protein>
    <recommendedName>
        <fullName evidence="1">Large ribosomal subunit protein bL19</fullName>
    </recommendedName>
    <alternativeName>
        <fullName evidence="2">50S ribosomal protein L19</fullName>
    </alternativeName>
</protein>
<evidence type="ECO:0000255" key="1">
    <source>
        <dbReference type="HAMAP-Rule" id="MF_00402"/>
    </source>
</evidence>
<evidence type="ECO:0000305" key="2"/>
<reference key="1">
    <citation type="journal article" date="2009" name="PLoS ONE">
        <title>The complete genome of Teredinibacter turnerae T7901: an intracellular endosymbiont of marine wood-boring bivalves (shipworms).</title>
        <authorList>
            <person name="Yang J.C."/>
            <person name="Madupu R."/>
            <person name="Durkin A.S."/>
            <person name="Ekborg N.A."/>
            <person name="Pedamallu C.S."/>
            <person name="Hostetler J.B."/>
            <person name="Radune D."/>
            <person name="Toms B.S."/>
            <person name="Henrissat B."/>
            <person name="Coutinho P.M."/>
            <person name="Schwarz S."/>
            <person name="Field L."/>
            <person name="Trindade-Silva A.E."/>
            <person name="Soares C.A.G."/>
            <person name="Elshahawi S."/>
            <person name="Hanora A."/>
            <person name="Schmidt E.W."/>
            <person name="Haygood M.G."/>
            <person name="Posfai J."/>
            <person name="Benner J."/>
            <person name="Madinger C."/>
            <person name="Nove J."/>
            <person name="Anton B."/>
            <person name="Chaudhary K."/>
            <person name="Foster J."/>
            <person name="Holman A."/>
            <person name="Kumar S."/>
            <person name="Lessard P.A."/>
            <person name="Luyten Y.A."/>
            <person name="Slatko B."/>
            <person name="Wood N."/>
            <person name="Wu B."/>
            <person name="Teplitski M."/>
            <person name="Mougous J.D."/>
            <person name="Ward N."/>
            <person name="Eisen J.A."/>
            <person name="Badger J.H."/>
            <person name="Distel D.L."/>
        </authorList>
    </citation>
    <scope>NUCLEOTIDE SEQUENCE [LARGE SCALE GENOMIC DNA]</scope>
    <source>
        <strain>ATCC 39867 / T7901</strain>
    </source>
</reference>
<gene>
    <name evidence="1" type="primary">rplS</name>
    <name type="ordered locus">TERTU_1162</name>
</gene>
<proteinExistence type="inferred from homology"/>
<name>RL19_TERTT</name>